<sequence>MKINLLTFGVSTLVERNIGYITQIIGPVLDAAFPPGKMPNIYNSLIVKGQNPAGQQINVTCEVQQLLGNNKVRAIAMSATDGLTRGMEVIDTGAPLSVPVGQATLGRIFNVLGEPVDNLGPINADKKSSIHEPAPAFTQLDTKLSIFETGIKVVDLLAPYRRGGKIGLFGGAGVGKTVLIMELINNIAKAHGGVSVFGGVGERTREGNDLYTEMKESKVINEQNLSESKVALVYGQMNEPPGARMRVGLTALTIAEYFRDVNKQDVLLFIDNIFRFVQAGSEVSALLGRMPSAVGYQPTLSTEMGSLQERITSTKEGSITSIQAVYVPADDLTDPAPATTFAHLDATTVLSRGLAAKGIYPAVDPLDSTSTMLQPWIVGEEHYETAQGVKQTLQRYKELQDIIAILGLDELSEEDRLTVARARKIERFLSQPFFVAEVFTGSPGKYVSLAETIKGFQMILSGELDSLPEQAFYLVGNIEEATAKAGISQMED</sequence>
<protein>
    <recommendedName>
        <fullName evidence="1">ATP synthase subunit beta, chloroplastic</fullName>
        <ecNumber evidence="1">7.1.2.2</ecNumber>
    </recommendedName>
    <alternativeName>
        <fullName evidence="1">ATP synthase F1 sector subunit beta</fullName>
    </alternativeName>
    <alternativeName>
        <fullName evidence="1">F-ATPase subunit beta</fullName>
    </alternativeName>
</protein>
<accession>O03081</accession>
<evidence type="ECO:0000255" key="1">
    <source>
        <dbReference type="HAMAP-Rule" id="MF_01347"/>
    </source>
</evidence>
<proteinExistence type="inferred from homology"/>
<dbReference type="EC" id="7.1.2.2" evidence="1"/>
<dbReference type="EMBL" id="AP004638">
    <property type="protein sequence ID" value="BAB84223.1"/>
    <property type="molecule type" value="Genomic_DNA"/>
</dbReference>
<dbReference type="EMBL" id="U93822">
    <property type="protein sequence ID" value="AAB51730.2"/>
    <property type="molecule type" value="Genomic_DNA"/>
</dbReference>
<dbReference type="RefSeq" id="NP_569636.1">
    <property type="nucleotide sequence ID" value="NC_003386.1"/>
</dbReference>
<dbReference type="SMR" id="O03081"/>
<dbReference type="GeneID" id="2545105"/>
<dbReference type="GO" id="GO:0009535">
    <property type="term" value="C:chloroplast thylakoid membrane"/>
    <property type="evidence" value="ECO:0007669"/>
    <property type="project" value="UniProtKB-SubCell"/>
</dbReference>
<dbReference type="GO" id="GO:0005739">
    <property type="term" value="C:mitochondrion"/>
    <property type="evidence" value="ECO:0007669"/>
    <property type="project" value="GOC"/>
</dbReference>
<dbReference type="GO" id="GO:0045259">
    <property type="term" value="C:proton-transporting ATP synthase complex"/>
    <property type="evidence" value="ECO:0007669"/>
    <property type="project" value="UniProtKB-KW"/>
</dbReference>
<dbReference type="GO" id="GO:0005524">
    <property type="term" value="F:ATP binding"/>
    <property type="evidence" value="ECO:0007669"/>
    <property type="project" value="UniProtKB-UniRule"/>
</dbReference>
<dbReference type="GO" id="GO:0016887">
    <property type="term" value="F:ATP hydrolysis activity"/>
    <property type="evidence" value="ECO:0007669"/>
    <property type="project" value="InterPro"/>
</dbReference>
<dbReference type="GO" id="GO:0046933">
    <property type="term" value="F:proton-transporting ATP synthase activity, rotational mechanism"/>
    <property type="evidence" value="ECO:0007669"/>
    <property type="project" value="UniProtKB-UniRule"/>
</dbReference>
<dbReference type="GO" id="GO:0042776">
    <property type="term" value="P:proton motive force-driven mitochondrial ATP synthesis"/>
    <property type="evidence" value="ECO:0007669"/>
    <property type="project" value="TreeGrafter"/>
</dbReference>
<dbReference type="CDD" id="cd18110">
    <property type="entry name" value="ATP-synt_F1_beta_C"/>
    <property type="match status" value="1"/>
</dbReference>
<dbReference type="CDD" id="cd18115">
    <property type="entry name" value="ATP-synt_F1_beta_N"/>
    <property type="match status" value="1"/>
</dbReference>
<dbReference type="CDD" id="cd01133">
    <property type="entry name" value="F1-ATPase_beta_CD"/>
    <property type="match status" value="1"/>
</dbReference>
<dbReference type="FunFam" id="1.10.1140.10:FF:000001">
    <property type="entry name" value="ATP synthase subunit beta"/>
    <property type="match status" value="1"/>
</dbReference>
<dbReference type="FunFam" id="3.40.50.300:FF:000026">
    <property type="entry name" value="ATP synthase subunit beta"/>
    <property type="match status" value="1"/>
</dbReference>
<dbReference type="FunFam" id="2.40.10.170:FF:000002">
    <property type="entry name" value="ATP synthase subunit beta, chloroplastic"/>
    <property type="match status" value="1"/>
</dbReference>
<dbReference type="Gene3D" id="2.40.10.170">
    <property type="match status" value="1"/>
</dbReference>
<dbReference type="Gene3D" id="1.10.1140.10">
    <property type="entry name" value="Bovine Mitochondrial F1-atpase, Atp Synthase Beta Chain, Chain D, domain 3"/>
    <property type="match status" value="1"/>
</dbReference>
<dbReference type="Gene3D" id="3.40.50.300">
    <property type="entry name" value="P-loop containing nucleotide triphosphate hydrolases"/>
    <property type="match status" value="1"/>
</dbReference>
<dbReference type="HAMAP" id="MF_01347">
    <property type="entry name" value="ATP_synth_beta_bact"/>
    <property type="match status" value="1"/>
</dbReference>
<dbReference type="InterPro" id="IPR003593">
    <property type="entry name" value="AAA+_ATPase"/>
</dbReference>
<dbReference type="InterPro" id="IPR055190">
    <property type="entry name" value="ATP-synt_VA_C"/>
</dbReference>
<dbReference type="InterPro" id="IPR005722">
    <property type="entry name" value="ATP_synth_F1_bsu"/>
</dbReference>
<dbReference type="InterPro" id="IPR020003">
    <property type="entry name" value="ATPase_a/bsu_AS"/>
</dbReference>
<dbReference type="InterPro" id="IPR050053">
    <property type="entry name" value="ATPase_alpha/beta_chains"/>
</dbReference>
<dbReference type="InterPro" id="IPR004100">
    <property type="entry name" value="ATPase_F1/V1/A1_a/bsu_N"/>
</dbReference>
<dbReference type="InterPro" id="IPR036121">
    <property type="entry name" value="ATPase_F1/V1/A1_a/bsu_N_sf"/>
</dbReference>
<dbReference type="InterPro" id="IPR000194">
    <property type="entry name" value="ATPase_F1/V1/A1_a/bsu_nucl-bd"/>
</dbReference>
<dbReference type="InterPro" id="IPR024034">
    <property type="entry name" value="ATPase_F1/V1_b/a_C"/>
</dbReference>
<dbReference type="InterPro" id="IPR027417">
    <property type="entry name" value="P-loop_NTPase"/>
</dbReference>
<dbReference type="NCBIfam" id="TIGR01039">
    <property type="entry name" value="atpD"/>
    <property type="match status" value="1"/>
</dbReference>
<dbReference type="PANTHER" id="PTHR15184">
    <property type="entry name" value="ATP SYNTHASE"/>
    <property type="match status" value="1"/>
</dbReference>
<dbReference type="PANTHER" id="PTHR15184:SF71">
    <property type="entry name" value="ATP SYNTHASE SUBUNIT BETA, MITOCHONDRIAL"/>
    <property type="match status" value="1"/>
</dbReference>
<dbReference type="Pfam" id="PF00006">
    <property type="entry name" value="ATP-synt_ab"/>
    <property type="match status" value="1"/>
</dbReference>
<dbReference type="Pfam" id="PF02874">
    <property type="entry name" value="ATP-synt_ab_N"/>
    <property type="match status" value="1"/>
</dbReference>
<dbReference type="Pfam" id="PF22919">
    <property type="entry name" value="ATP-synt_VA_C"/>
    <property type="match status" value="1"/>
</dbReference>
<dbReference type="SMART" id="SM00382">
    <property type="entry name" value="AAA"/>
    <property type="match status" value="1"/>
</dbReference>
<dbReference type="SUPFAM" id="SSF47917">
    <property type="entry name" value="C-terminal domain of alpha and beta subunits of F1 ATP synthase"/>
    <property type="match status" value="1"/>
</dbReference>
<dbReference type="SUPFAM" id="SSF50615">
    <property type="entry name" value="N-terminal domain of alpha and beta subunits of F1 ATP synthase"/>
    <property type="match status" value="1"/>
</dbReference>
<dbReference type="SUPFAM" id="SSF52540">
    <property type="entry name" value="P-loop containing nucleoside triphosphate hydrolases"/>
    <property type="match status" value="1"/>
</dbReference>
<dbReference type="PROSITE" id="PS00152">
    <property type="entry name" value="ATPASE_ALPHA_BETA"/>
    <property type="match status" value="1"/>
</dbReference>
<name>ATPB_PSINU</name>
<geneLocation type="chloroplast"/>
<gene>
    <name evidence="1" type="primary">atpB</name>
</gene>
<comment type="function">
    <text evidence="1">Produces ATP from ADP in the presence of a proton gradient across the membrane. The catalytic sites are hosted primarily by the beta subunits.</text>
</comment>
<comment type="catalytic activity">
    <reaction evidence="1">
        <text>ATP + H2O + 4 H(+)(in) = ADP + phosphate + 5 H(+)(out)</text>
        <dbReference type="Rhea" id="RHEA:57720"/>
        <dbReference type="ChEBI" id="CHEBI:15377"/>
        <dbReference type="ChEBI" id="CHEBI:15378"/>
        <dbReference type="ChEBI" id="CHEBI:30616"/>
        <dbReference type="ChEBI" id="CHEBI:43474"/>
        <dbReference type="ChEBI" id="CHEBI:456216"/>
        <dbReference type="EC" id="7.1.2.2"/>
    </reaction>
</comment>
<comment type="subunit">
    <text evidence="1">F-type ATPases have 2 components, CF(1) - the catalytic core - and CF(0) - the membrane proton channel. CF(1) has five subunits: alpha(3), beta(3), gamma(1), delta(1), epsilon(1). CF(0) has four main subunits: a(1), b(1), b'(1) and c(9-12).</text>
</comment>
<comment type="subcellular location">
    <subcellularLocation>
        <location evidence="1">Plastid</location>
        <location evidence="1">Chloroplast thylakoid membrane</location>
        <topology evidence="1">Peripheral membrane protein</topology>
    </subcellularLocation>
</comment>
<comment type="similarity">
    <text evidence="1">Belongs to the ATPase alpha/beta chains family.</text>
</comment>
<organism>
    <name type="scientific">Psilotum nudum</name>
    <name type="common">Whisk fern</name>
    <name type="synonym">Lycopodium nudum</name>
    <dbReference type="NCBI Taxonomy" id="3240"/>
    <lineage>
        <taxon>Eukaryota</taxon>
        <taxon>Viridiplantae</taxon>
        <taxon>Streptophyta</taxon>
        <taxon>Embryophyta</taxon>
        <taxon>Tracheophyta</taxon>
        <taxon>Polypodiopsida</taxon>
        <taxon>Ophioglossidae</taxon>
        <taxon>Psilotales</taxon>
        <taxon>Psilotaceae</taxon>
        <taxon>Psilotum</taxon>
    </lineage>
</organism>
<keyword id="KW-0066">ATP synthesis</keyword>
<keyword id="KW-0067">ATP-binding</keyword>
<keyword id="KW-0139">CF(1)</keyword>
<keyword id="KW-0150">Chloroplast</keyword>
<keyword id="KW-0375">Hydrogen ion transport</keyword>
<keyword id="KW-0406">Ion transport</keyword>
<keyword id="KW-0472">Membrane</keyword>
<keyword id="KW-0547">Nucleotide-binding</keyword>
<keyword id="KW-0934">Plastid</keyword>
<keyword id="KW-0793">Thylakoid</keyword>
<keyword id="KW-1278">Translocase</keyword>
<keyword id="KW-0813">Transport</keyword>
<reference key="1">
    <citation type="journal article" date="2004" name="Mol. Biol. Evol.">
        <title>Chloroplast phylogeny indicates that bryophytes are monophyletic.</title>
        <authorList>
            <person name="Nishiyama T."/>
            <person name="Wolf P.G."/>
            <person name="Kugita M."/>
            <person name="Sinclair R.B."/>
            <person name="Sugita M."/>
            <person name="Sugiura C."/>
            <person name="Wakasugi T."/>
            <person name="Yamada K."/>
            <person name="Yoshinaga K."/>
            <person name="Yamaguchi K."/>
            <person name="Ueda K."/>
            <person name="Hasebe M."/>
        </authorList>
    </citation>
    <scope>NUCLEOTIDE SEQUENCE [LARGE SCALE GENOMIC DNA]</scope>
    <source>
        <strain>Kingyoku</strain>
    </source>
</reference>
<reference key="2">
    <citation type="journal article" date="1997" name="Am. J. Bot.">
        <title>Evaluation of atpB nucleotide sequences for phylogenetic studies of ferns and other pteridophytes.</title>
        <authorList>
            <person name="Wolf P.G."/>
        </authorList>
    </citation>
    <scope>NUCLEOTIDE SEQUENCE [GENOMIC DNA] OF 33-492</scope>
</reference>
<reference key="3">
    <citation type="submission" date="2000-01" db="EMBL/GenBank/DDBJ databases">
        <authorList>
            <person name="Wolf P.G."/>
            <person name="Su P.-H."/>
        </authorList>
    </citation>
    <scope>SEQUENCE REVISION</scope>
</reference>
<feature type="chain" id="PRO_0000144546" description="ATP synthase subunit beta, chloroplastic">
    <location>
        <begin position="1"/>
        <end position="492"/>
    </location>
</feature>
<feature type="binding site" evidence="1">
    <location>
        <begin position="170"/>
        <end position="177"/>
    </location>
    <ligand>
        <name>ATP</name>
        <dbReference type="ChEBI" id="CHEBI:30616"/>
    </ligand>
</feature>